<sequence>MKLLILSLALVLALSQVKGNQPDWADEAANGAHQDAWKSLKADVENVYYMVKATYKNDPVWGNDFTCVGVMANDVNEDEKSIQAEFLFMNNADTNMQFATEKVTAVKMYGYNRENAFRYETEDGQVFTDVIAYSDDNCDVIYVPGTDGNEEGYELWTTDYDNIPANCLNKFNEYAVGRETRDVFTSACLE</sequence>
<reference evidence="7 8" key="1">
    <citation type="journal article" date="1999" name="Mol. Cell">
        <title>Tick histamine-binding proteins: isolation, cloning, and three-dimensional structure.</title>
        <authorList>
            <person name="Paesen G.C."/>
            <person name="Adams P.L."/>
            <person name="Harlos K."/>
            <person name="Nuttall P.A."/>
            <person name="Stuart D.I."/>
        </authorList>
    </citation>
    <scope>NUCLEOTIDE SEQUENCE [MRNA]</scope>
    <scope>X-RAY CRYSTALLOGRAPHY (1.25 ANGSTROMS)</scope>
    <scope>FUNCTION</scope>
    <scope>SUBUNIT</scope>
    <scope>DEVELOPMENTAL STAGE</scope>
    <scope>RECOMBINANT EXPRESSION</scope>
    <source>
        <tissue>Salivary gland</tissue>
    </source>
</reference>
<reference key="2">
    <citation type="journal article" date="2000" name="Biochim. Biophys. Acta">
        <title>Tick histamine-binding proteins: lipocalins with a second binding cavity.</title>
        <authorList>
            <person name="Paesen G.C."/>
            <person name="Adams P.L."/>
            <person name="Nuttall P.A."/>
            <person name="Stuart D.L."/>
        </authorList>
    </citation>
    <scope>REVIEW</scope>
</reference>
<reference evidence="9 10" key="3">
    <citation type="submission" date="2009-02" db="PDB data bank">
        <title>Entropic contributions to binding in a 'Hydrophilic' Ligand-Protein interaction.</title>
        <authorList>
            <person name="Syme N.R."/>
            <person name="Dennis C.A."/>
            <person name="Bronowska A."/>
            <person name="Paesen G."/>
            <person name="Homans S.W."/>
        </authorList>
    </citation>
    <scope>X-RAY CRYSTALLOGRAPHY (1.55 ANGSTROMS) OF 20-190</scope>
</reference>
<protein>
    <recommendedName>
        <fullName evidence="3">Female-specific histamine-binding protein 2</fullName>
        <shortName evidence="3">FS-HBP2</shortName>
    </recommendedName>
    <alternativeName>
        <fullName evidence="3 4">RaHBP2</fullName>
    </alternativeName>
</protein>
<evidence type="ECO:0000255" key="1"/>
<evidence type="ECO:0000269" key="2">
    <source>
    </source>
</evidence>
<evidence type="ECO:0000303" key="3">
    <source>
    </source>
</evidence>
<evidence type="ECO:0000303" key="4">
    <source>
    </source>
</evidence>
<evidence type="ECO:0000305" key="5"/>
<evidence type="ECO:0000305" key="6">
    <source>
    </source>
</evidence>
<evidence type="ECO:0000312" key="7">
    <source>
        <dbReference type="PDB" id="1QFT"/>
    </source>
</evidence>
<evidence type="ECO:0000312" key="8">
    <source>
        <dbReference type="PDB" id="1QFV"/>
    </source>
</evidence>
<evidence type="ECO:0000312" key="9">
    <source>
        <dbReference type="PDB" id="3G7X"/>
    </source>
</evidence>
<evidence type="ECO:0000312" key="10">
    <source>
        <dbReference type="PDB" id="3GAQ"/>
    </source>
</evidence>
<evidence type="ECO:0007744" key="11">
    <source>
        <dbReference type="PDB" id="1QFT"/>
    </source>
</evidence>
<evidence type="ECO:0007744" key="12">
    <source>
        <dbReference type="PDB" id="1QFV"/>
    </source>
</evidence>
<evidence type="ECO:0007744" key="13">
    <source>
        <dbReference type="PDB" id="3G7X"/>
    </source>
</evidence>
<evidence type="ECO:0007744" key="14">
    <source>
        <dbReference type="PDB" id="3GAQ"/>
    </source>
</evidence>
<evidence type="ECO:0007829" key="15">
    <source>
        <dbReference type="PDB" id="1QFT"/>
    </source>
</evidence>
<keyword id="KW-0002">3D-structure</keyword>
<keyword id="KW-1015">Disulfide bond</keyword>
<keyword id="KW-0964">Secreted</keyword>
<keyword id="KW-0732">Signal</keyword>
<dbReference type="EMBL" id="U96081">
    <property type="protein sequence ID" value="AAC63107.1"/>
    <property type="molecule type" value="mRNA"/>
</dbReference>
<dbReference type="PDB" id="1QFT">
    <property type="method" value="X-ray"/>
    <property type="resolution" value="1.25 A"/>
    <property type="chains" value="A/B=20-190"/>
</dbReference>
<dbReference type="PDB" id="1QFV">
    <property type="method" value="X-ray"/>
    <property type="resolution" value="1.36 A"/>
    <property type="chains" value="A/B=20-190"/>
</dbReference>
<dbReference type="PDB" id="3G7X">
    <property type="method" value="X-ray"/>
    <property type="resolution" value="1.55 A"/>
    <property type="chains" value="A/B=20-190"/>
</dbReference>
<dbReference type="PDB" id="3GAQ">
    <property type="method" value="X-ray"/>
    <property type="resolution" value="2.25 A"/>
    <property type="chains" value="A/B=20-190"/>
</dbReference>
<dbReference type="PDBsum" id="1QFT"/>
<dbReference type="PDBsum" id="1QFV"/>
<dbReference type="PDBsum" id="3G7X"/>
<dbReference type="PDBsum" id="3GAQ"/>
<dbReference type="SMR" id="O77421"/>
<dbReference type="EvolutionaryTrace" id="O77421"/>
<dbReference type="GO" id="GO:0005576">
    <property type="term" value="C:extracellular region"/>
    <property type="evidence" value="ECO:0007669"/>
    <property type="project" value="UniProtKB-SubCell"/>
</dbReference>
<dbReference type="GO" id="GO:0043176">
    <property type="term" value="F:amine binding"/>
    <property type="evidence" value="ECO:0007669"/>
    <property type="project" value="InterPro"/>
</dbReference>
<dbReference type="GO" id="GO:0030682">
    <property type="term" value="P:symbiont-mediated perturbation of host defenses"/>
    <property type="evidence" value="ECO:0007669"/>
    <property type="project" value="InterPro"/>
</dbReference>
<dbReference type="Gene3D" id="2.40.128.20">
    <property type="match status" value="1"/>
</dbReference>
<dbReference type="InterPro" id="IPR012674">
    <property type="entry name" value="Calycin"/>
</dbReference>
<dbReference type="InterPro" id="IPR002970">
    <property type="entry name" value="Tick_his-bd"/>
</dbReference>
<dbReference type="Pfam" id="PF02098">
    <property type="entry name" value="His_binding"/>
    <property type="match status" value="1"/>
</dbReference>
<dbReference type="PRINTS" id="PR01220">
    <property type="entry name" value="HISBINDING"/>
</dbReference>
<dbReference type="SUPFAM" id="SSF50814">
    <property type="entry name" value="Lipocalins"/>
    <property type="match status" value="1"/>
</dbReference>
<organism>
    <name type="scientific">Rhipicephalus appendiculatus</name>
    <name type="common">Brown ear tick</name>
    <dbReference type="NCBI Taxonomy" id="34631"/>
    <lineage>
        <taxon>Eukaryota</taxon>
        <taxon>Metazoa</taxon>
        <taxon>Ecdysozoa</taxon>
        <taxon>Arthropoda</taxon>
        <taxon>Chelicerata</taxon>
        <taxon>Arachnida</taxon>
        <taxon>Acari</taxon>
        <taxon>Parasitiformes</taxon>
        <taxon>Ixodida</taxon>
        <taxon>Ixodoidea</taxon>
        <taxon>Ixodidae</taxon>
        <taxon>Rhipicephalinae</taxon>
        <taxon>Rhipicephalus</taxon>
        <taxon>Rhipicephalus</taxon>
    </lineage>
</organism>
<proteinExistence type="evidence at protein level"/>
<comment type="function">
    <text evidence="2">Salivary tick protein that acts by scavenging histamine at the wound site, outcompeting histamine receptors for histamine, thereby overcoming host inflammatory responses (PubMed:10360182). Binds histamine with a high-affinity (Kd=1.7 nM) (PubMed:10360182). Contains two binding histamine sites (H and L), that appear to bind histamine with differing affinities (high and low) (PubMed:10360182).</text>
</comment>
<comment type="subunit">
    <text evidence="6">Monomer.</text>
</comment>
<comment type="subcellular location">
    <subcellularLocation>
        <location evidence="6">Secreted</location>
    </subcellularLocation>
</comment>
<comment type="tissue specificity">
    <text evidence="6">Expressed in salivary glands.</text>
</comment>
<comment type="developmental stage">
    <text evidence="2">Early stage of adult feeding.</text>
</comment>
<comment type="similarity">
    <text evidence="5">Belongs to the calycin superfamily. Histamine-binding salivary protein family.</text>
</comment>
<accession>O77421</accession>
<feature type="signal peptide" evidence="1">
    <location>
        <begin position="1"/>
        <end position="19"/>
    </location>
</feature>
<feature type="chain" id="PRO_0000021400" description="Female-specific histamine-binding protein 2">
    <location>
        <begin position="20"/>
        <end position="190"/>
    </location>
</feature>
<feature type="binding site" evidence="2 11">
    <location>
        <position position="39"/>
    </location>
    <ligand>
        <name>histamine</name>
        <dbReference type="ChEBI" id="CHEBI:58432"/>
        <label>1</label>
        <note>high affinity</note>
    </ligand>
</feature>
<feature type="binding site" evidence="2 11">
    <location>
        <position position="39"/>
    </location>
    <ligand>
        <name>histamine</name>
        <dbReference type="ChEBI" id="CHEBI:58432"/>
        <label>2</label>
        <note>low affinity</note>
    </ligand>
</feature>
<feature type="binding site" evidence="2 11">
    <location>
        <position position="43"/>
    </location>
    <ligand>
        <name>histamine</name>
        <dbReference type="ChEBI" id="CHEBI:58432"/>
        <label>2</label>
        <note>low affinity</note>
    </ligand>
</feature>
<feature type="binding site" evidence="2">
    <location>
        <position position="55"/>
    </location>
    <ligand>
        <name>histamine</name>
        <dbReference type="ChEBI" id="CHEBI:58432"/>
        <label>1</label>
        <note>high affinity</note>
    </ligand>
</feature>
<feature type="binding site" evidence="2">
    <location>
        <position position="58"/>
    </location>
    <ligand>
        <name>histamine</name>
        <dbReference type="ChEBI" id="CHEBI:58432"/>
        <label>1</label>
        <note>high affinity</note>
    </ligand>
</feature>
<feature type="binding site" evidence="2">
    <location>
        <position position="61"/>
    </location>
    <ligand>
        <name>histamine</name>
        <dbReference type="ChEBI" id="CHEBI:58432"/>
        <label>1</label>
        <note>high affinity</note>
    </ligand>
</feature>
<feature type="binding site" evidence="2 12 13">
    <location>
        <position position="101"/>
    </location>
    <ligand>
        <name>histamine</name>
        <dbReference type="ChEBI" id="CHEBI:58432"/>
        <label>1</label>
        <note>high affinity</note>
    </ligand>
</feature>
<feature type="binding site" evidence="2">
    <location>
        <position position="117"/>
    </location>
    <ligand>
        <name>histamine</name>
        <dbReference type="ChEBI" id="CHEBI:58432"/>
        <label>2</label>
        <note>low affinity</note>
    </ligand>
</feature>
<feature type="binding site" evidence="2 11">
    <location>
        <position position="119"/>
    </location>
    <ligand>
        <name>histamine</name>
        <dbReference type="ChEBI" id="CHEBI:58432"/>
        <label>2</label>
        <note>low affinity</note>
    </ligand>
</feature>
<feature type="binding site" evidence="2">
    <location>
        <position position="127"/>
    </location>
    <ligand>
        <name>histamine</name>
        <dbReference type="ChEBI" id="CHEBI:58432"/>
        <label>1</label>
        <note>high affinity</note>
    </ligand>
</feature>
<feature type="binding site" evidence="2 11">
    <location>
        <position position="139"/>
    </location>
    <ligand>
        <name>histamine</name>
        <dbReference type="ChEBI" id="CHEBI:58432"/>
        <label>1</label>
        <note>high affinity</note>
    </ligand>
</feature>
<feature type="binding site" evidence="2 11">
    <location>
        <position position="139"/>
    </location>
    <ligand>
        <name>histamine</name>
        <dbReference type="ChEBI" id="CHEBI:58432"/>
        <label>2</label>
        <note>low affinity</note>
    </ligand>
</feature>
<feature type="binding site" evidence="2 12 13">
    <location>
        <position position="154"/>
    </location>
    <ligand>
        <name>histamine</name>
        <dbReference type="ChEBI" id="CHEBI:58432"/>
        <label>1</label>
        <note>high affinity</note>
    </ligand>
</feature>
<feature type="binding site" evidence="2">
    <location>
        <position position="156"/>
    </location>
    <ligand>
        <name>histamine</name>
        <dbReference type="ChEBI" id="CHEBI:58432"/>
        <label>2</label>
        <note>low affinity</note>
    </ligand>
</feature>
<feature type="disulfide bond" evidence="2 11 12 13 14">
    <location>
        <begin position="67"/>
        <end position="188"/>
    </location>
</feature>
<feature type="disulfide bond" evidence="2 11 12 13 14">
    <location>
        <begin position="138"/>
        <end position="167"/>
    </location>
</feature>
<feature type="helix" evidence="15">
    <location>
        <begin position="27"/>
        <end position="30"/>
    </location>
</feature>
<feature type="helix" evidence="15">
    <location>
        <begin position="31"/>
        <end position="33"/>
    </location>
</feature>
<feature type="helix" evidence="15">
    <location>
        <begin position="36"/>
        <end position="45"/>
    </location>
</feature>
<feature type="strand" evidence="15">
    <location>
        <begin position="48"/>
        <end position="54"/>
    </location>
</feature>
<feature type="strand" evidence="15">
    <location>
        <begin position="56"/>
        <end position="58"/>
    </location>
</feature>
<feature type="turn" evidence="15">
    <location>
        <begin position="59"/>
        <end position="61"/>
    </location>
</feature>
<feature type="strand" evidence="15">
    <location>
        <begin position="66"/>
        <end position="76"/>
    </location>
</feature>
<feature type="turn" evidence="15">
    <location>
        <begin position="77"/>
        <end position="80"/>
    </location>
</feature>
<feature type="strand" evidence="15">
    <location>
        <begin position="81"/>
        <end position="90"/>
    </location>
</feature>
<feature type="strand" evidence="15">
    <location>
        <begin position="93"/>
        <end position="106"/>
    </location>
</feature>
<feature type="strand" evidence="15">
    <location>
        <begin position="116"/>
        <end position="121"/>
    </location>
</feature>
<feature type="strand" evidence="15">
    <location>
        <begin position="126"/>
        <end position="135"/>
    </location>
</feature>
<feature type="strand" evidence="15">
    <location>
        <begin position="138"/>
        <end position="143"/>
    </location>
</feature>
<feature type="strand" evidence="15">
    <location>
        <begin position="147"/>
        <end position="149"/>
    </location>
</feature>
<feature type="strand" evidence="15">
    <location>
        <begin position="152"/>
        <end position="158"/>
    </location>
</feature>
<feature type="strand" evidence="15">
    <location>
        <begin position="160"/>
        <end position="164"/>
    </location>
</feature>
<feature type="helix" evidence="15">
    <location>
        <begin position="165"/>
        <end position="174"/>
    </location>
</feature>
<feature type="turn" evidence="15">
    <location>
        <begin position="175"/>
        <end position="177"/>
    </location>
</feature>
<feature type="helix" evidence="15">
    <location>
        <begin position="186"/>
        <end position="188"/>
    </location>
</feature>
<name>HBP2_RHIAP</name>